<keyword id="KW-0029">Amino-acid transport</keyword>
<keyword id="KW-0072">Autophagy</keyword>
<keyword id="KW-0472">Membrane</keyword>
<keyword id="KW-0597">Phosphoprotein</keyword>
<keyword id="KW-1185">Reference proteome</keyword>
<keyword id="KW-0812">Transmembrane</keyword>
<keyword id="KW-1133">Transmembrane helix</keyword>
<keyword id="KW-0813">Transport</keyword>
<keyword id="KW-0926">Vacuole</keyword>
<evidence type="ECO:0000255" key="1"/>
<evidence type="ECO:0000269" key="2">
    <source>
    </source>
</evidence>
<evidence type="ECO:0000269" key="3">
    <source>
    </source>
</evidence>
<evidence type="ECO:0000269" key="4">
    <source>
    </source>
</evidence>
<evidence type="ECO:0000305" key="5"/>
<evidence type="ECO:0007744" key="6">
    <source>
    </source>
</evidence>
<feature type="chain" id="PRO_0000207629" description="Autophagy-related protein 22">
    <location>
        <begin position="1"/>
        <end position="528"/>
    </location>
</feature>
<feature type="topological domain" description="Cytoplasmic" evidence="1">
    <location>
        <begin position="1"/>
        <end position="98"/>
    </location>
</feature>
<feature type="transmembrane region" description="Helical" evidence="1">
    <location>
        <begin position="99"/>
        <end position="119"/>
    </location>
</feature>
<feature type="topological domain" description="Vacuolar" evidence="1">
    <location>
        <begin position="120"/>
        <end position="130"/>
    </location>
</feature>
<feature type="transmembrane region" description="Helical" evidence="1">
    <location>
        <begin position="131"/>
        <end position="151"/>
    </location>
</feature>
<feature type="topological domain" description="Cytoplasmic" evidence="1">
    <location>
        <begin position="152"/>
        <end position="153"/>
    </location>
</feature>
<feature type="transmembrane region" description="Helical" evidence="1">
    <location>
        <begin position="154"/>
        <end position="174"/>
    </location>
</feature>
<feature type="topological domain" description="Vacuolar" evidence="1">
    <location>
        <begin position="175"/>
        <end position="210"/>
    </location>
</feature>
<feature type="transmembrane region" description="Helical" evidence="1">
    <location>
        <begin position="211"/>
        <end position="231"/>
    </location>
</feature>
<feature type="topological domain" description="Cytoplasmic" evidence="1">
    <location>
        <begin position="232"/>
        <end position="241"/>
    </location>
</feature>
<feature type="transmembrane region" description="Helical" evidence="1">
    <location>
        <begin position="242"/>
        <end position="262"/>
    </location>
</feature>
<feature type="topological domain" description="Vacuolar" evidence="1">
    <location>
        <begin position="263"/>
        <end position="318"/>
    </location>
</feature>
<feature type="transmembrane region" description="Helical" evidence="1">
    <location>
        <begin position="319"/>
        <end position="339"/>
    </location>
</feature>
<feature type="topological domain" description="Cytoplasmic" evidence="1">
    <location>
        <begin position="340"/>
        <end position="352"/>
    </location>
</feature>
<feature type="transmembrane region" description="Helical" evidence="1">
    <location>
        <begin position="353"/>
        <end position="373"/>
    </location>
</feature>
<feature type="topological domain" description="Vacuolar" evidence="1">
    <location>
        <begin position="374"/>
        <end position="388"/>
    </location>
</feature>
<feature type="transmembrane region" description="Helical" evidence="1">
    <location>
        <begin position="389"/>
        <end position="409"/>
    </location>
</feature>
<feature type="topological domain" description="Cytoplasmic" evidence="1">
    <location>
        <begin position="410"/>
        <end position="417"/>
    </location>
</feature>
<feature type="transmembrane region" description="Helical" evidence="1">
    <location>
        <begin position="418"/>
        <end position="438"/>
    </location>
</feature>
<feature type="topological domain" description="Vacuolar" evidence="1">
    <location>
        <begin position="439"/>
        <end position="485"/>
    </location>
</feature>
<feature type="transmembrane region" description="Helical" evidence="1">
    <location>
        <begin position="486"/>
        <end position="506"/>
    </location>
</feature>
<feature type="topological domain" description="Cytoplasmic" evidence="1">
    <location>
        <begin position="507"/>
        <end position="528"/>
    </location>
</feature>
<feature type="modified residue" description="Phosphoserine" evidence="6">
    <location>
        <position position="278"/>
    </location>
</feature>
<proteinExistence type="evidence at protein level"/>
<reference key="1">
    <citation type="journal article" date="1992" name="Nature">
        <title>The complete DNA sequence of yeast chromosome III.</title>
        <authorList>
            <person name="Oliver S.G."/>
            <person name="van der Aart Q.J.M."/>
            <person name="Agostoni-Carbone M.L."/>
            <person name="Aigle M."/>
            <person name="Alberghina L."/>
            <person name="Alexandraki D."/>
            <person name="Antoine G."/>
            <person name="Anwar R."/>
            <person name="Ballesta J.P.G."/>
            <person name="Benit P."/>
            <person name="Berben G."/>
            <person name="Bergantino E."/>
            <person name="Biteau N."/>
            <person name="Bolle P.-A."/>
            <person name="Bolotin-Fukuhara M."/>
            <person name="Brown A."/>
            <person name="Brown A.J.P."/>
            <person name="Buhler J.-M."/>
            <person name="Carcano C."/>
            <person name="Carignani G."/>
            <person name="Cederberg H."/>
            <person name="Chanet R."/>
            <person name="Contreras R."/>
            <person name="Crouzet M."/>
            <person name="Daignan-Fornier B."/>
            <person name="Defoor E."/>
            <person name="Delgado M.D."/>
            <person name="Demolder J."/>
            <person name="Doira C."/>
            <person name="Dubois E."/>
            <person name="Dujon B."/>
            <person name="Duesterhoeft A."/>
            <person name="Erdmann D."/>
            <person name="Esteban M."/>
            <person name="Fabre F."/>
            <person name="Fairhead C."/>
            <person name="Faye G."/>
            <person name="Feldmann H."/>
            <person name="Fiers W."/>
            <person name="Francingues-Gaillard M.-C."/>
            <person name="Franco L."/>
            <person name="Frontali L."/>
            <person name="Fukuhara H."/>
            <person name="Fuller L.J."/>
            <person name="Galland P."/>
            <person name="Gent M.E."/>
            <person name="Gigot D."/>
            <person name="Gilliquet V."/>
            <person name="Glansdorff N."/>
            <person name="Goffeau A."/>
            <person name="Grenson M."/>
            <person name="Grisanti P."/>
            <person name="Grivell L.A."/>
            <person name="de Haan M."/>
            <person name="Haasemann M."/>
            <person name="Hatat D."/>
            <person name="Hoenicka J."/>
            <person name="Hegemann J.H."/>
            <person name="Herbert C.J."/>
            <person name="Hilger F."/>
            <person name="Hohmann S."/>
            <person name="Hollenberg C.P."/>
            <person name="Huse K."/>
            <person name="Iborra F."/>
            <person name="Indge K.J."/>
            <person name="Isono K."/>
            <person name="Jacq C."/>
            <person name="Jacquet M."/>
            <person name="James C.M."/>
            <person name="Jauniaux J.-C."/>
            <person name="Jia Y."/>
            <person name="Jimenez A."/>
            <person name="Kelly A."/>
            <person name="Kleinhans U."/>
            <person name="Kreisl P."/>
            <person name="Lanfranchi G."/>
            <person name="Lewis C."/>
            <person name="van der Linden C.G."/>
            <person name="Lucchini G."/>
            <person name="Lutzenkirchen K."/>
            <person name="Maat M.J."/>
            <person name="Mallet L."/>
            <person name="Mannhaupt G."/>
            <person name="Martegani E."/>
            <person name="Mathieu A."/>
            <person name="Maurer C.T.C."/>
            <person name="McConnell D."/>
            <person name="McKee R.A."/>
            <person name="Messenguy F."/>
            <person name="Mewes H.-W."/>
            <person name="Molemans F."/>
            <person name="Montague M.A."/>
            <person name="Muzi Falconi M."/>
            <person name="Navas L."/>
            <person name="Newlon C.S."/>
            <person name="Noone D."/>
            <person name="Pallier C."/>
            <person name="Panzeri L."/>
            <person name="Pearson B.M."/>
            <person name="Perea J."/>
            <person name="Philippsen P."/>
            <person name="Pierard A."/>
            <person name="Planta R.J."/>
            <person name="Plevani P."/>
            <person name="Poetsch B."/>
            <person name="Pohl F.M."/>
            <person name="Purnelle B."/>
            <person name="Ramezani Rad M."/>
            <person name="Rasmussen S.W."/>
            <person name="Raynal A."/>
            <person name="Remacha M.A."/>
            <person name="Richterich P."/>
            <person name="Roberts A.B."/>
            <person name="Rodriguez F."/>
            <person name="Sanz E."/>
            <person name="Schaaff-Gerstenschlaeger I."/>
            <person name="Scherens B."/>
            <person name="Schweitzer B."/>
            <person name="Shu Y."/>
            <person name="Skala J."/>
            <person name="Slonimski P.P."/>
            <person name="Sor F."/>
            <person name="Soustelle C."/>
            <person name="Spiegelberg R."/>
            <person name="Stateva L.I."/>
            <person name="Steensma H.Y."/>
            <person name="Steiner S."/>
            <person name="Thierry A."/>
            <person name="Thireos G."/>
            <person name="Tzermia M."/>
            <person name="Urrestarazu L.A."/>
            <person name="Valle G."/>
            <person name="Vetter I."/>
            <person name="van Vliet-Reedijk J.C."/>
            <person name="Voet M."/>
            <person name="Volckaert G."/>
            <person name="Vreken P."/>
            <person name="Wang H."/>
            <person name="Warmington J.R."/>
            <person name="von Wettstein D."/>
            <person name="Wicksteed B.L."/>
            <person name="Wilson C."/>
            <person name="Wurst H."/>
            <person name="Xu G."/>
            <person name="Yoshikawa A."/>
            <person name="Zimmermann F.K."/>
            <person name="Sgouros J.G."/>
        </authorList>
    </citation>
    <scope>NUCLEOTIDE SEQUENCE [LARGE SCALE GENOMIC DNA]</scope>
    <source>
        <strain>ATCC 204508 / S288c</strain>
    </source>
</reference>
<reference key="2">
    <citation type="journal article" date="2014" name="G3 (Bethesda)">
        <title>The reference genome sequence of Saccharomyces cerevisiae: Then and now.</title>
        <authorList>
            <person name="Engel S.R."/>
            <person name="Dietrich F.S."/>
            <person name="Fisk D.G."/>
            <person name="Binkley G."/>
            <person name="Balakrishnan R."/>
            <person name="Costanzo M.C."/>
            <person name="Dwight S.S."/>
            <person name="Hitz B.C."/>
            <person name="Karra K."/>
            <person name="Nash R.S."/>
            <person name="Weng S."/>
            <person name="Wong E.D."/>
            <person name="Lloyd P."/>
            <person name="Skrzypek M.S."/>
            <person name="Miyasato S.R."/>
            <person name="Simison M."/>
            <person name="Cherry J.M."/>
        </authorList>
    </citation>
    <scope>GENOME REANNOTATION</scope>
    <source>
        <strain>ATCC 204508 / S288c</strain>
    </source>
</reference>
<reference key="3">
    <citation type="journal article" date="1996" name="J. Biol. Chem.">
        <title>Genetic and phenotypic overlap between autophagy and the cytoplasm to vacuole protein targeting pathway.</title>
        <authorList>
            <person name="Harding T.M."/>
            <person name="Hefner-Gravink A."/>
            <person name="Thumm M."/>
            <person name="Klionsky D.J."/>
        </authorList>
    </citation>
    <scope>FUNCTION</scope>
</reference>
<reference key="4">
    <citation type="journal article" date="2000" name="J. Cell Sci.">
        <title>The breakdown of autophagic vesicles inside the vacuole depends on Aut4p.</title>
        <authorList>
            <person name="Suriapranata I."/>
            <person name="Epple U.D."/>
            <person name="Bernreuther D."/>
            <person name="Bredschneider M."/>
            <person name="Sovarasteanu K."/>
            <person name="Thumm M."/>
        </authorList>
    </citation>
    <scope>FUNCTION</scope>
</reference>
<reference key="5">
    <citation type="journal article" date="2003" name="Dev. Cell">
        <title>A unified nomenclature for yeast autophagy-related genes.</title>
        <authorList>
            <person name="Klionsky D.J."/>
            <person name="Cregg J.M."/>
            <person name="Dunn W.A. Jr."/>
            <person name="Emr S.D."/>
            <person name="Sakai Y."/>
            <person name="Sandoval I.V."/>
            <person name="Sibirny A."/>
            <person name="Subramani S."/>
            <person name="Thumm M."/>
            <person name="Veenhuis M."/>
            <person name="Ohsumi Y."/>
        </authorList>
    </citation>
    <scope>NOMENCLATURE</scope>
</reference>
<reference key="6">
    <citation type="journal article" date="2006" name="Mol. Biol. Cell">
        <title>Atg22 recycles amino acids to link the degradative and recycling functions of autophagy.</title>
        <authorList>
            <person name="Yang Z."/>
            <person name="Huang J."/>
            <person name="Geng J."/>
            <person name="Nair U."/>
            <person name="Klionsky D.J."/>
        </authorList>
    </citation>
    <scope>FUNCTION</scope>
    <scope>SUBCELLULAR LOCATION</scope>
</reference>
<reference key="7">
    <citation type="journal article" date="2006" name="Proc. Natl. Acad. Sci. U.S.A.">
        <title>A global topology map of the Saccharomyces cerevisiae membrane proteome.</title>
        <authorList>
            <person name="Kim H."/>
            <person name="Melen K."/>
            <person name="Oesterberg M."/>
            <person name="von Heijne G."/>
        </authorList>
    </citation>
    <scope>TOPOLOGY [LARGE SCALE ANALYSIS]</scope>
    <source>
        <strain>ATCC 208353 / W303-1A</strain>
    </source>
</reference>
<reference key="8">
    <citation type="journal article" date="2008" name="Mol. Cell. Proteomics">
        <title>A multidimensional chromatography technology for in-depth phosphoproteome analysis.</title>
        <authorList>
            <person name="Albuquerque C.P."/>
            <person name="Smolka M.B."/>
            <person name="Payne S.H."/>
            <person name="Bafna V."/>
            <person name="Eng J."/>
            <person name="Zhou H."/>
        </authorList>
    </citation>
    <scope>PHOSPHORYLATION [LARGE SCALE ANALYSIS] AT SER-278</scope>
    <scope>IDENTIFICATION BY MASS SPECTROMETRY [LARGE SCALE ANALYSIS]</scope>
</reference>
<reference key="9">
    <citation type="journal article" date="2009" name="Science">
        <title>Global analysis of Cdk1 substrate phosphorylation sites provides insights into evolution.</title>
        <authorList>
            <person name="Holt L.J."/>
            <person name="Tuch B.B."/>
            <person name="Villen J."/>
            <person name="Johnson A.D."/>
            <person name="Gygi S.P."/>
            <person name="Morgan D.O."/>
        </authorList>
    </citation>
    <scope>IDENTIFICATION BY MASS SPECTROMETRY [LARGE SCALE ANALYSIS]</scope>
</reference>
<reference key="10">
    <citation type="journal article" date="2012" name="Proc. Natl. Acad. Sci. U.S.A.">
        <title>N-terminal acetylome analyses and functional insights of the N-terminal acetyltransferase NatB.</title>
        <authorList>
            <person name="Van Damme P."/>
            <person name="Lasa M."/>
            <person name="Polevoda B."/>
            <person name="Gazquez C."/>
            <person name="Elosegui-Artola A."/>
            <person name="Kim D.S."/>
            <person name="De Juan-Pardo E."/>
            <person name="Demeyer K."/>
            <person name="Hole K."/>
            <person name="Larrea E."/>
            <person name="Timmerman E."/>
            <person name="Prieto J."/>
            <person name="Arnesen T."/>
            <person name="Sherman F."/>
            <person name="Gevaert K."/>
            <person name="Aldabe R."/>
        </authorList>
    </citation>
    <scope>IDENTIFICATION BY MASS SPECTROMETRY [LARGE SCALE ANALYSIS]</scope>
</reference>
<dbReference type="EMBL" id="X59720">
    <property type="protein sequence ID" value="CAA42378.1"/>
    <property type="molecule type" value="Genomic_DNA"/>
</dbReference>
<dbReference type="EMBL" id="BK006937">
    <property type="protein sequence ID" value="DAA07446.1"/>
    <property type="molecule type" value="Genomic_DNA"/>
</dbReference>
<dbReference type="PIR" id="S19366">
    <property type="entry name" value="S19366"/>
</dbReference>
<dbReference type="RefSeq" id="NP_009892.1">
    <property type="nucleotide sequence ID" value="NM_001178683.1"/>
</dbReference>
<dbReference type="BioGRID" id="30945">
    <property type="interactions" value="106"/>
</dbReference>
<dbReference type="DIP" id="DIP-4976N"/>
<dbReference type="FunCoup" id="P25568">
    <property type="interactions" value="66"/>
</dbReference>
<dbReference type="IntAct" id="P25568">
    <property type="interactions" value="4"/>
</dbReference>
<dbReference type="MINT" id="P25568"/>
<dbReference type="STRING" id="4932.YCL038C"/>
<dbReference type="TCDB" id="2.A.1.24.1">
    <property type="family name" value="the major facilitator superfamily (mfs)"/>
</dbReference>
<dbReference type="TCDB" id="9.A.15.1.1">
    <property type="family name" value="the autophagy-related phagophore-formation transporter (apt) family"/>
</dbReference>
<dbReference type="iPTMnet" id="P25568"/>
<dbReference type="PaxDb" id="4932-YCL038C"/>
<dbReference type="PeptideAtlas" id="P25568"/>
<dbReference type="EnsemblFungi" id="YCL038C_mRNA">
    <property type="protein sequence ID" value="YCL038C"/>
    <property type="gene ID" value="YCL038C"/>
</dbReference>
<dbReference type="GeneID" id="850319"/>
<dbReference type="KEGG" id="sce:YCL038C"/>
<dbReference type="AGR" id="SGD:S000000543"/>
<dbReference type="SGD" id="S000000543">
    <property type="gene designation" value="ATG22"/>
</dbReference>
<dbReference type="VEuPathDB" id="FungiDB:YCL038C"/>
<dbReference type="eggNOG" id="ENOG502QR9I">
    <property type="taxonomic scope" value="Eukaryota"/>
</dbReference>
<dbReference type="HOGENOM" id="CLU_017518_1_0_1"/>
<dbReference type="InParanoid" id="P25568"/>
<dbReference type="OMA" id="QQQWEMY"/>
<dbReference type="OrthoDB" id="42657at2759"/>
<dbReference type="BioCyc" id="YEAST:G3O-29297-MONOMER"/>
<dbReference type="BioGRID-ORCS" id="850319">
    <property type="hits" value="2 hits in 10 CRISPR screens"/>
</dbReference>
<dbReference type="PRO" id="PR:P25568"/>
<dbReference type="Proteomes" id="UP000002311">
    <property type="component" value="Chromosome III"/>
</dbReference>
<dbReference type="RNAct" id="P25568">
    <property type="molecule type" value="protein"/>
</dbReference>
<dbReference type="GO" id="GO:0000329">
    <property type="term" value="C:fungal-type vacuole membrane"/>
    <property type="evidence" value="ECO:0000314"/>
    <property type="project" value="SGD"/>
</dbReference>
<dbReference type="GO" id="GO:0032974">
    <property type="term" value="P:amino acid transmembrane export from vacuole"/>
    <property type="evidence" value="ECO:0000315"/>
    <property type="project" value="SGD"/>
</dbReference>
<dbReference type="GO" id="GO:0006914">
    <property type="term" value="P:autophagy"/>
    <property type="evidence" value="ECO:0007669"/>
    <property type="project" value="UniProtKB-KW"/>
</dbReference>
<dbReference type="CDD" id="cd17483">
    <property type="entry name" value="MFS_Atg22_like"/>
    <property type="match status" value="1"/>
</dbReference>
<dbReference type="FunFam" id="1.20.1250.20:FF:001085">
    <property type="entry name" value="Autophagy-related protein 22"/>
    <property type="match status" value="1"/>
</dbReference>
<dbReference type="Gene3D" id="1.20.1250.20">
    <property type="entry name" value="MFS general substrate transporter like domains"/>
    <property type="match status" value="1"/>
</dbReference>
<dbReference type="InterPro" id="IPR044738">
    <property type="entry name" value="Atg22"/>
</dbReference>
<dbReference type="InterPro" id="IPR024671">
    <property type="entry name" value="Atg22-like"/>
</dbReference>
<dbReference type="InterPro" id="IPR050495">
    <property type="entry name" value="ATG22/LtaA_families"/>
</dbReference>
<dbReference type="InterPro" id="IPR036259">
    <property type="entry name" value="MFS_trans_sf"/>
</dbReference>
<dbReference type="PANTHER" id="PTHR23519">
    <property type="entry name" value="AUTOPHAGY-RELATED PROTEIN 22"/>
    <property type="match status" value="1"/>
</dbReference>
<dbReference type="PANTHER" id="PTHR23519:SF1">
    <property type="entry name" value="AUTOPHAGY-RELATED PROTEIN 22"/>
    <property type="match status" value="1"/>
</dbReference>
<dbReference type="Pfam" id="PF11700">
    <property type="entry name" value="ATG22"/>
    <property type="match status" value="1"/>
</dbReference>
<dbReference type="SUPFAM" id="SSF103473">
    <property type="entry name" value="MFS general substrate transporter"/>
    <property type="match status" value="1"/>
</dbReference>
<gene>
    <name type="primary">ATG22</name>
    <name type="synonym">AUT4</name>
    <name type="ordered locus">YCL038C</name>
    <name type="ORF">YCL38C</name>
</gene>
<comment type="function">
    <text evidence="2 3 4">Vacuolar effluxer which mediate the efflux of leucine and other amino acids resulting from autophagic degradation. The release of autophagic amino acids allows the maintenance of protein synthesis and viability during nitrogen starvation.</text>
</comment>
<comment type="subcellular location">
    <subcellularLocation>
        <location evidence="3">Vacuole membrane</location>
        <topology evidence="3">Multi-pass membrane protein</topology>
    </subcellularLocation>
    <text>Vacuole and punctate structures.</text>
</comment>
<comment type="similarity">
    <text evidence="5">Belongs to the ATG22 family.</text>
</comment>
<protein>
    <recommendedName>
        <fullName>Autophagy-related protein 22</fullName>
    </recommendedName>
</protein>
<name>ATG22_YEAST</name>
<accession>P25568</accession>
<accession>D6VQX7</accession>
<sequence>MSYGTINDMNESVTNYRIKKAQNNIKGWYAYSFSSEPFVVSAVSTYIPLLLQQFASINGVKVHDHSIPCLSETGSDSDKCVLGLFNNRIFVDTSSFALYVFSLSVLFQTIIVISVSGIVDLWGSVKFKGRILVWFGIVGALSTVAISKLNDTQIYSLAGLYIVANGCFGVINVVGNSLLPIFVKDSLKCQSQGAYEPDKVDSLTTVISGRGASLGYSSALIVQIVSMFLVASKKGSKQDVQVAVLFVGIWWFVWQLPMIWLIDDVTIPIRVDDSTLASARSPYPGEQDALGQLNWKNYLSYGWVSLFESFKHARLLKDVMIFLIAWFIISDSITTINSTAVLFSKAELHMSTLNLIMISVLTVVNAMLGAFMIPQFLATKFRWTSSQTLMYIIIWASFIPFYGILGFFFNAFGLKHKFEMFLLAIWYGLSLGGLSAVSRSVFSLIVPPGKESTFFSMFSITDKGSSILGPFLVGLLTDKTHNIRYSFYFFFLLLMLSLPVLNCLDVKRGRREAEELSQVLPESERRLD</sequence>
<organism>
    <name type="scientific">Saccharomyces cerevisiae (strain ATCC 204508 / S288c)</name>
    <name type="common">Baker's yeast</name>
    <dbReference type="NCBI Taxonomy" id="559292"/>
    <lineage>
        <taxon>Eukaryota</taxon>
        <taxon>Fungi</taxon>
        <taxon>Dikarya</taxon>
        <taxon>Ascomycota</taxon>
        <taxon>Saccharomycotina</taxon>
        <taxon>Saccharomycetes</taxon>
        <taxon>Saccharomycetales</taxon>
        <taxon>Saccharomycetaceae</taxon>
        <taxon>Saccharomyces</taxon>
    </lineage>
</organism>